<evidence type="ECO:0000250" key="1">
    <source>
        <dbReference type="UniProtKB" id="Q16775"/>
    </source>
</evidence>
<evidence type="ECO:0000305" key="2"/>
<gene>
    <name type="ordered locus">BQ2027_MB2612C</name>
</gene>
<dbReference type="EC" id="3.-.-.-"/>
<dbReference type="EMBL" id="LT708304">
    <property type="protein sequence ID" value="SIU01230.1"/>
    <property type="molecule type" value="Genomic_DNA"/>
</dbReference>
<dbReference type="RefSeq" id="NP_856258.1">
    <property type="nucleotide sequence ID" value="NC_002945.3"/>
</dbReference>
<dbReference type="RefSeq" id="WP_003413366.1">
    <property type="nucleotide sequence ID" value="NC_002945.4"/>
</dbReference>
<dbReference type="SMR" id="P64262"/>
<dbReference type="KEGG" id="mbo:BQ2027_MB2612C"/>
<dbReference type="PATRIC" id="fig|233413.5.peg.2873"/>
<dbReference type="Proteomes" id="UP000001419">
    <property type="component" value="Chromosome"/>
</dbReference>
<dbReference type="GO" id="GO:0016787">
    <property type="term" value="F:hydrolase activity"/>
    <property type="evidence" value="ECO:0007669"/>
    <property type="project" value="UniProtKB-KW"/>
</dbReference>
<dbReference type="GO" id="GO:0046872">
    <property type="term" value="F:metal ion binding"/>
    <property type="evidence" value="ECO:0007669"/>
    <property type="project" value="UniProtKB-KW"/>
</dbReference>
<dbReference type="CDD" id="cd06262">
    <property type="entry name" value="metallo-hydrolase-like_MBL-fold"/>
    <property type="match status" value="1"/>
</dbReference>
<dbReference type="Gene3D" id="3.60.15.10">
    <property type="entry name" value="Ribonuclease Z/Hydroxyacylglutathione hydrolase-like"/>
    <property type="match status" value="1"/>
</dbReference>
<dbReference type="InterPro" id="IPR051453">
    <property type="entry name" value="MBL_Glyoxalase_II"/>
</dbReference>
<dbReference type="InterPro" id="IPR001279">
    <property type="entry name" value="Metallo-B-lactamas"/>
</dbReference>
<dbReference type="InterPro" id="IPR036866">
    <property type="entry name" value="RibonucZ/Hydroxyglut_hydro"/>
</dbReference>
<dbReference type="PANTHER" id="PTHR46233">
    <property type="entry name" value="HYDROXYACYLGLUTATHIONE HYDROLASE GLOC"/>
    <property type="match status" value="1"/>
</dbReference>
<dbReference type="PANTHER" id="PTHR46233:SF3">
    <property type="entry name" value="HYDROXYACYLGLUTATHIONE HYDROLASE GLOC"/>
    <property type="match status" value="1"/>
</dbReference>
<dbReference type="Pfam" id="PF00753">
    <property type="entry name" value="Lactamase_B"/>
    <property type="match status" value="1"/>
</dbReference>
<dbReference type="SMART" id="SM00849">
    <property type="entry name" value="Lactamase_B"/>
    <property type="match status" value="1"/>
</dbReference>
<dbReference type="SUPFAM" id="SSF56281">
    <property type="entry name" value="Metallo-hydrolase/oxidoreductase"/>
    <property type="match status" value="1"/>
</dbReference>
<feature type="chain" id="PRO_0000192362" description="Uncharacterized protein Mb2612c">
    <location>
        <begin position="1"/>
        <end position="224"/>
    </location>
</feature>
<feature type="binding site" evidence="1">
    <location>
        <position position="57"/>
    </location>
    <ligand>
        <name>Zn(2+)</name>
        <dbReference type="ChEBI" id="CHEBI:29105"/>
        <label>1</label>
    </ligand>
</feature>
<feature type="binding site" evidence="1">
    <location>
        <position position="59"/>
    </location>
    <ligand>
        <name>Zn(2+)</name>
        <dbReference type="ChEBI" id="CHEBI:29105"/>
        <label>1</label>
    </ligand>
</feature>
<feature type="binding site" evidence="1">
    <location>
        <position position="61"/>
    </location>
    <ligand>
        <name>Zn(2+)</name>
        <dbReference type="ChEBI" id="CHEBI:29105"/>
        <label>2</label>
    </ligand>
</feature>
<feature type="binding site" evidence="1">
    <location>
        <position position="62"/>
    </location>
    <ligand>
        <name>Zn(2+)</name>
        <dbReference type="ChEBI" id="CHEBI:29105"/>
        <label>2</label>
    </ligand>
</feature>
<feature type="binding site" evidence="1">
    <location>
        <position position="138"/>
    </location>
    <ligand>
        <name>Zn(2+)</name>
        <dbReference type="ChEBI" id="CHEBI:29105"/>
        <label>1</label>
    </ligand>
</feature>
<feature type="binding site" evidence="1">
    <location>
        <position position="162"/>
    </location>
    <ligand>
        <name>Zn(2+)</name>
        <dbReference type="ChEBI" id="CHEBI:29105"/>
        <label>1</label>
    </ligand>
</feature>
<feature type="binding site" evidence="1">
    <location>
        <position position="162"/>
    </location>
    <ligand>
        <name>Zn(2+)</name>
        <dbReference type="ChEBI" id="CHEBI:29105"/>
        <label>2</label>
    </ligand>
</feature>
<feature type="binding site" evidence="1">
    <location>
        <position position="203"/>
    </location>
    <ligand>
        <name>Zn(2+)</name>
        <dbReference type="ChEBI" id="CHEBI:29105"/>
        <label>2</label>
    </ligand>
</feature>
<keyword id="KW-0378">Hydrolase</keyword>
<keyword id="KW-0479">Metal-binding</keyword>
<keyword id="KW-1185">Reference proteome</keyword>
<keyword id="KW-0862">Zinc</keyword>
<reference key="1">
    <citation type="journal article" date="2003" name="Proc. Natl. Acad. Sci. U.S.A.">
        <title>The complete genome sequence of Mycobacterium bovis.</title>
        <authorList>
            <person name="Garnier T."/>
            <person name="Eiglmeier K."/>
            <person name="Camus J.-C."/>
            <person name="Medina N."/>
            <person name="Mansoor H."/>
            <person name="Pryor M."/>
            <person name="Duthoy S."/>
            <person name="Grondin S."/>
            <person name="Lacroix C."/>
            <person name="Monsempe C."/>
            <person name="Simon S."/>
            <person name="Harris B."/>
            <person name="Atkin R."/>
            <person name="Doggett J."/>
            <person name="Mayes R."/>
            <person name="Keating L."/>
            <person name="Wheeler P.R."/>
            <person name="Parkhill J."/>
            <person name="Barrell B.G."/>
            <person name="Cole S.T."/>
            <person name="Gordon S.V."/>
            <person name="Hewinson R.G."/>
        </authorList>
    </citation>
    <scope>NUCLEOTIDE SEQUENCE [LARGE SCALE GENOMIC DNA]</scope>
    <source>
        <strain>ATCC BAA-935 / AF2122/97</strain>
    </source>
</reference>
<reference key="2">
    <citation type="journal article" date="2017" name="Genome Announc.">
        <title>Updated reference genome sequence and annotation of Mycobacterium bovis AF2122/97.</title>
        <authorList>
            <person name="Malone K.M."/>
            <person name="Farrell D."/>
            <person name="Stuber T.P."/>
            <person name="Schubert O.T."/>
            <person name="Aebersold R."/>
            <person name="Robbe-Austerman S."/>
            <person name="Gordon S.V."/>
        </authorList>
    </citation>
    <scope>NUCLEOTIDE SEQUENCE [LARGE SCALE GENOMIC DNA]</scope>
    <scope>GENOME REANNOTATION</scope>
    <source>
        <strain>ATCC BAA-935 / AF2122/97</strain>
    </source>
</reference>
<proteinExistence type="inferred from homology"/>
<accession>P64262</accession>
<accession>A0A1R3Y1M2</accession>
<accession>Q50640</accession>
<accession>X2BLR5</accession>
<organism>
    <name type="scientific">Mycobacterium bovis (strain ATCC BAA-935 / AF2122/97)</name>
    <dbReference type="NCBI Taxonomy" id="233413"/>
    <lineage>
        <taxon>Bacteria</taxon>
        <taxon>Bacillati</taxon>
        <taxon>Actinomycetota</taxon>
        <taxon>Actinomycetes</taxon>
        <taxon>Mycobacteriales</taxon>
        <taxon>Mycobacteriaceae</taxon>
        <taxon>Mycobacterium</taxon>
        <taxon>Mycobacterium tuberculosis complex</taxon>
    </lineage>
</organism>
<protein>
    <recommendedName>
        <fullName>Uncharacterized protein Mb2612c</fullName>
        <ecNumber>3.-.-.-</ecNumber>
    </recommendedName>
</protein>
<sequence>MLITGFPAGLLACNCYVLAERPGTDAVIVDPGQGAMGTLRRILDKNRLTPAAVLLTHGHIDHIWSAQKVSDTFGCPTYVHPADRFMLTDPIYGLGPRIAQLVAGAFFREPKQVVELDRDGDKIDLGGISVNIDHTPGHTRGSVVFRVLQATNNDKDIVFTGDTLFERAIGRTDLAGGSGRDLLRSIVDKLLVLDDSTVVLPGHGNSTTIGAERRFNPFLEGLSR</sequence>
<name>Y2612_MYCBO</name>
<comment type="cofactor">
    <cofactor evidence="1">
        <name>Zn(2+)</name>
        <dbReference type="ChEBI" id="CHEBI:29105"/>
    </cofactor>
    <text evidence="1">Binds 2 Zn(2+) ions per subunit.</text>
</comment>
<comment type="similarity">
    <text evidence="2">Belongs to the metallo-beta-lactamase superfamily. Glyoxalase II family.</text>
</comment>